<accession>Q5HTI5</accession>
<keyword id="KW-0489">Methyltransferase</keyword>
<keyword id="KW-0949">S-adenosyl-L-methionine</keyword>
<keyword id="KW-0808">Transferase</keyword>
<keyword id="KW-0819">tRNA processing</keyword>
<dbReference type="EC" id="2.1.1.33" evidence="1"/>
<dbReference type="EMBL" id="CP000025">
    <property type="protein sequence ID" value="AAW35733.1"/>
    <property type="molecule type" value="Genomic_DNA"/>
</dbReference>
<dbReference type="RefSeq" id="WP_011049923.1">
    <property type="nucleotide sequence ID" value="NC_003912.7"/>
</dbReference>
<dbReference type="SMR" id="Q5HTI5"/>
<dbReference type="KEGG" id="cjr:CJE1414"/>
<dbReference type="HOGENOM" id="CLU_041532_0_0_7"/>
<dbReference type="UniPathway" id="UPA00989"/>
<dbReference type="GO" id="GO:0043527">
    <property type="term" value="C:tRNA methyltransferase complex"/>
    <property type="evidence" value="ECO:0007669"/>
    <property type="project" value="TreeGrafter"/>
</dbReference>
<dbReference type="GO" id="GO:0008176">
    <property type="term" value="F:tRNA (guanine(46)-N7)-methyltransferase activity"/>
    <property type="evidence" value="ECO:0007669"/>
    <property type="project" value="UniProtKB-UniRule"/>
</dbReference>
<dbReference type="CDD" id="cd02440">
    <property type="entry name" value="AdoMet_MTases"/>
    <property type="match status" value="1"/>
</dbReference>
<dbReference type="Gene3D" id="3.40.50.150">
    <property type="entry name" value="Vaccinia Virus protein VP39"/>
    <property type="match status" value="1"/>
</dbReference>
<dbReference type="HAMAP" id="MF_01057">
    <property type="entry name" value="tRNA_methyltr_TrmB"/>
    <property type="match status" value="1"/>
</dbReference>
<dbReference type="InterPro" id="IPR029063">
    <property type="entry name" value="SAM-dependent_MTases_sf"/>
</dbReference>
<dbReference type="InterPro" id="IPR003358">
    <property type="entry name" value="tRNA_(Gua-N-7)_MeTrfase_Trmb"/>
</dbReference>
<dbReference type="InterPro" id="IPR055361">
    <property type="entry name" value="tRNA_methyltr_TrmB_bact"/>
</dbReference>
<dbReference type="NCBIfam" id="NF010719">
    <property type="entry name" value="PRK14121.1"/>
    <property type="match status" value="1"/>
</dbReference>
<dbReference type="NCBIfam" id="TIGR00091">
    <property type="entry name" value="tRNA (guanosine(46)-N7)-methyltransferase TrmB"/>
    <property type="match status" value="1"/>
</dbReference>
<dbReference type="PANTHER" id="PTHR23417">
    <property type="entry name" value="3-DEOXY-D-MANNO-OCTULOSONIC-ACID TRANSFERASE/TRNA GUANINE-N 7 - -METHYLTRANSFERASE"/>
    <property type="match status" value="1"/>
</dbReference>
<dbReference type="PANTHER" id="PTHR23417:SF14">
    <property type="entry name" value="PENTACOTRIPEPTIDE-REPEAT REGION OF PRORP DOMAIN-CONTAINING PROTEIN"/>
    <property type="match status" value="1"/>
</dbReference>
<dbReference type="Pfam" id="PF02390">
    <property type="entry name" value="Methyltransf_4"/>
    <property type="match status" value="1"/>
</dbReference>
<dbReference type="SUPFAM" id="SSF53335">
    <property type="entry name" value="S-adenosyl-L-methionine-dependent methyltransferases"/>
    <property type="match status" value="1"/>
</dbReference>
<dbReference type="PROSITE" id="PS51625">
    <property type="entry name" value="SAM_MT_TRMB"/>
    <property type="match status" value="1"/>
</dbReference>
<evidence type="ECO:0000255" key="1">
    <source>
        <dbReference type="HAMAP-Rule" id="MF_01057"/>
    </source>
</evidence>
<feature type="chain" id="PRO_0000229159" description="tRNA (guanine-N(7)-)-methyltransferase">
    <location>
        <begin position="1"/>
        <end position="392"/>
    </location>
</feature>
<feature type="binding site" evidence="1">
    <location>
        <position position="123"/>
    </location>
    <ligand>
        <name>S-adenosyl-L-methionine</name>
        <dbReference type="ChEBI" id="CHEBI:59789"/>
    </ligand>
</feature>
<feature type="binding site" evidence="1">
    <location>
        <position position="148"/>
    </location>
    <ligand>
        <name>S-adenosyl-L-methionine</name>
        <dbReference type="ChEBI" id="CHEBI:59789"/>
    </ligand>
</feature>
<feature type="binding site" evidence="1">
    <location>
        <position position="175"/>
    </location>
    <ligand>
        <name>S-adenosyl-L-methionine</name>
        <dbReference type="ChEBI" id="CHEBI:59789"/>
    </ligand>
</feature>
<feature type="binding site" evidence="1">
    <location>
        <position position="201"/>
    </location>
    <ligand>
        <name>substrate</name>
    </ligand>
</feature>
<feature type="binding site" evidence="1">
    <location>
        <position position="231"/>
    </location>
    <ligand>
        <name>substrate</name>
    </ligand>
</feature>
<proteinExistence type="inferred from homology"/>
<gene>
    <name evidence="1" type="primary">trmB</name>
    <name type="ordered locus">CJE1414</name>
</gene>
<reference key="1">
    <citation type="journal article" date="2005" name="PLoS Biol.">
        <title>Major structural differences and novel potential virulence mechanisms from the genomes of multiple Campylobacter species.</title>
        <authorList>
            <person name="Fouts D.E."/>
            <person name="Mongodin E.F."/>
            <person name="Mandrell R.E."/>
            <person name="Miller W.G."/>
            <person name="Rasko D.A."/>
            <person name="Ravel J."/>
            <person name="Brinkac L.M."/>
            <person name="DeBoy R.T."/>
            <person name="Parker C.T."/>
            <person name="Daugherty S.C."/>
            <person name="Dodson R.J."/>
            <person name="Durkin A.S."/>
            <person name="Madupu R."/>
            <person name="Sullivan S.A."/>
            <person name="Shetty J.U."/>
            <person name="Ayodeji M.A."/>
            <person name="Shvartsbeyn A."/>
            <person name="Schatz M.C."/>
            <person name="Badger J.H."/>
            <person name="Fraser C.M."/>
            <person name="Nelson K.E."/>
        </authorList>
    </citation>
    <scope>NUCLEOTIDE SEQUENCE [LARGE SCALE GENOMIC DNA]</scope>
    <source>
        <strain>RM1221</strain>
    </source>
</reference>
<organism>
    <name type="scientific">Campylobacter jejuni (strain RM1221)</name>
    <dbReference type="NCBI Taxonomy" id="195099"/>
    <lineage>
        <taxon>Bacteria</taxon>
        <taxon>Pseudomonadati</taxon>
        <taxon>Campylobacterota</taxon>
        <taxon>Epsilonproteobacteria</taxon>
        <taxon>Campylobacterales</taxon>
        <taxon>Campylobacteraceae</taxon>
        <taxon>Campylobacter</taxon>
    </lineage>
</organism>
<name>TRMB_CAMJR</name>
<comment type="function">
    <text evidence="1">Catalyzes the formation of N(7)-methylguanine at position 46 (m7G46) in tRNA.</text>
</comment>
<comment type="catalytic activity">
    <reaction evidence="1">
        <text>guanosine(46) in tRNA + S-adenosyl-L-methionine = N(7)-methylguanosine(46) in tRNA + S-adenosyl-L-homocysteine</text>
        <dbReference type="Rhea" id="RHEA:42708"/>
        <dbReference type="Rhea" id="RHEA-COMP:10188"/>
        <dbReference type="Rhea" id="RHEA-COMP:10189"/>
        <dbReference type="ChEBI" id="CHEBI:57856"/>
        <dbReference type="ChEBI" id="CHEBI:59789"/>
        <dbReference type="ChEBI" id="CHEBI:74269"/>
        <dbReference type="ChEBI" id="CHEBI:74480"/>
        <dbReference type="EC" id="2.1.1.33"/>
    </reaction>
</comment>
<comment type="pathway">
    <text evidence="1">tRNA modification; N(7)-methylguanine-tRNA biosynthesis.</text>
</comment>
<comment type="similarity">
    <text evidence="1">Belongs to the class I-like SAM-binding methyltransferase superfamily. TrmB family.</text>
</comment>
<sequence>MPNFKSKKIKEINLPYSKDDVEFLWLAKNDNVSLIYTKVQEESFFLQIKKAQNGFVIKGDKHTKPSKIGYLQKALKIFKEGFCEDIINEAFGLKNNALIEKTPFIVDNFDELLSRLQGKIYIEIGFGSGRHLLYQAKENPNVLILGVEIYNPALTQVAKLAKAQNVNNILLIQSDARLLLSVLKSKSVEKIFLHFPVPWDKKPHRRVIGKDFCKECARVLTQNGRFELRTDSFEYFNFTLEQFLTFPVPKFSLRKNENLEISSKYEDRWKKQEKNIYDLWVWNFNQECKNYELNEFNLSSVEFSKEDLKKIEQNFKNITIKKDDFFLHFESIYKQDENLLLKVAFGAFNKPEHCYLHLDKTIDFAFKEPFKIQENIKAINELKEILKVQFKI</sequence>
<protein>
    <recommendedName>
        <fullName evidence="1">tRNA (guanine-N(7)-)-methyltransferase</fullName>
        <ecNumber evidence="1">2.1.1.33</ecNumber>
    </recommendedName>
    <alternativeName>
        <fullName evidence="1">tRNA (guanine(46)-N(7))-methyltransferase</fullName>
    </alternativeName>
    <alternativeName>
        <fullName evidence="1">tRNA(m7G46)-methyltransferase</fullName>
    </alternativeName>
</protein>